<evidence type="ECO:0000255" key="1">
    <source>
        <dbReference type="HAMAP-Rule" id="MF_01310"/>
    </source>
</evidence>
<evidence type="ECO:0000305" key="2"/>
<sequence>MAREPGRVRRRERKNITSGVAHVNASFNNTMITITDAQGNAISWSSAGMMGFKGSRKSTPYAAQVAADDAGRKAAEHGVRTLEVEVKGPGSGRESALRALQAVGFTITSIRDVTPIPHNGVRPSKRRRV</sequence>
<reference key="1">
    <citation type="journal article" date="2009" name="J. Bacteriol.">
        <title>Complete genome sequence of Erythrobacter litoralis HTCC2594.</title>
        <authorList>
            <person name="Oh H.M."/>
            <person name="Giovannoni S.J."/>
            <person name="Ferriera S."/>
            <person name="Johnson J."/>
            <person name="Cho J.C."/>
        </authorList>
    </citation>
    <scope>NUCLEOTIDE SEQUENCE [LARGE SCALE GENOMIC DNA]</scope>
    <source>
        <strain>HTCC2594</strain>
    </source>
</reference>
<keyword id="KW-1185">Reference proteome</keyword>
<keyword id="KW-0687">Ribonucleoprotein</keyword>
<keyword id="KW-0689">Ribosomal protein</keyword>
<keyword id="KW-0694">RNA-binding</keyword>
<keyword id="KW-0699">rRNA-binding</keyword>
<protein>
    <recommendedName>
        <fullName evidence="1">Small ribosomal subunit protein uS11</fullName>
    </recommendedName>
    <alternativeName>
        <fullName evidence="2">30S ribosomal protein S11</fullName>
    </alternativeName>
</protein>
<comment type="function">
    <text evidence="1">Located on the platform of the 30S subunit, it bridges several disparate RNA helices of the 16S rRNA. Forms part of the Shine-Dalgarno cleft in the 70S ribosome.</text>
</comment>
<comment type="subunit">
    <text evidence="1">Part of the 30S ribosomal subunit. Interacts with proteins S7 and S18. Binds to IF-3.</text>
</comment>
<comment type="similarity">
    <text evidence="1">Belongs to the universal ribosomal protein uS11 family.</text>
</comment>
<accession>Q2N9D6</accession>
<organism>
    <name type="scientific">Erythrobacter litoralis (strain HTCC2594)</name>
    <dbReference type="NCBI Taxonomy" id="314225"/>
    <lineage>
        <taxon>Bacteria</taxon>
        <taxon>Pseudomonadati</taxon>
        <taxon>Pseudomonadota</taxon>
        <taxon>Alphaproteobacteria</taxon>
        <taxon>Sphingomonadales</taxon>
        <taxon>Erythrobacteraceae</taxon>
        <taxon>Erythrobacter/Porphyrobacter group</taxon>
        <taxon>Erythrobacter</taxon>
    </lineage>
</organism>
<dbReference type="EMBL" id="CP000157">
    <property type="protein sequence ID" value="ABC63705.1"/>
    <property type="molecule type" value="Genomic_DNA"/>
</dbReference>
<dbReference type="RefSeq" id="WP_011414537.1">
    <property type="nucleotide sequence ID" value="NC_007722.1"/>
</dbReference>
<dbReference type="SMR" id="Q2N9D6"/>
<dbReference type="STRING" id="314225.ELI_08065"/>
<dbReference type="KEGG" id="eli:ELI_08065"/>
<dbReference type="eggNOG" id="COG0100">
    <property type="taxonomic scope" value="Bacteria"/>
</dbReference>
<dbReference type="HOGENOM" id="CLU_072439_5_0_5"/>
<dbReference type="OrthoDB" id="9806415at2"/>
<dbReference type="Proteomes" id="UP000008808">
    <property type="component" value="Chromosome"/>
</dbReference>
<dbReference type="GO" id="GO:1990904">
    <property type="term" value="C:ribonucleoprotein complex"/>
    <property type="evidence" value="ECO:0007669"/>
    <property type="project" value="UniProtKB-KW"/>
</dbReference>
<dbReference type="GO" id="GO:0005840">
    <property type="term" value="C:ribosome"/>
    <property type="evidence" value="ECO:0007669"/>
    <property type="project" value="UniProtKB-KW"/>
</dbReference>
<dbReference type="GO" id="GO:0019843">
    <property type="term" value="F:rRNA binding"/>
    <property type="evidence" value="ECO:0007669"/>
    <property type="project" value="UniProtKB-UniRule"/>
</dbReference>
<dbReference type="GO" id="GO:0003735">
    <property type="term" value="F:structural constituent of ribosome"/>
    <property type="evidence" value="ECO:0007669"/>
    <property type="project" value="InterPro"/>
</dbReference>
<dbReference type="GO" id="GO:0006412">
    <property type="term" value="P:translation"/>
    <property type="evidence" value="ECO:0007669"/>
    <property type="project" value="UniProtKB-UniRule"/>
</dbReference>
<dbReference type="FunFam" id="3.30.420.80:FF:000001">
    <property type="entry name" value="30S ribosomal protein S11"/>
    <property type="match status" value="1"/>
</dbReference>
<dbReference type="Gene3D" id="3.30.420.80">
    <property type="entry name" value="Ribosomal protein S11"/>
    <property type="match status" value="1"/>
</dbReference>
<dbReference type="HAMAP" id="MF_01310">
    <property type="entry name" value="Ribosomal_uS11"/>
    <property type="match status" value="1"/>
</dbReference>
<dbReference type="InterPro" id="IPR001971">
    <property type="entry name" value="Ribosomal_uS11"/>
</dbReference>
<dbReference type="InterPro" id="IPR019981">
    <property type="entry name" value="Ribosomal_uS11_bac-type"/>
</dbReference>
<dbReference type="InterPro" id="IPR018102">
    <property type="entry name" value="Ribosomal_uS11_CS"/>
</dbReference>
<dbReference type="InterPro" id="IPR036967">
    <property type="entry name" value="Ribosomal_uS11_sf"/>
</dbReference>
<dbReference type="NCBIfam" id="NF003698">
    <property type="entry name" value="PRK05309.1"/>
    <property type="match status" value="1"/>
</dbReference>
<dbReference type="NCBIfam" id="TIGR03632">
    <property type="entry name" value="uS11_bact"/>
    <property type="match status" value="1"/>
</dbReference>
<dbReference type="PANTHER" id="PTHR11759">
    <property type="entry name" value="40S RIBOSOMAL PROTEIN S14/30S RIBOSOMAL PROTEIN S11"/>
    <property type="match status" value="1"/>
</dbReference>
<dbReference type="Pfam" id="PF00411">
    <property type="entry name" value="Ribosomal_S11"/>
    <property type="match status" value="1"/>
</dbReference>
<dbReference type="PIRSF" id="PIRSF002131">
    <property type="entry name" value="Ribosomal_S11"/>
    <property type="match status" value="1"/>
</dbReference>
<dbReference type="SUPFAM" id="SSF53137">
    <property type="entry name" value="Translational machinery components"/>
    <property type="match status" value="1"/>
</dbReference>
<dbReference type="PROSITE" id="PS00054">
    <property type="entry name" value="RIBOSOMAL_S11"/>
    <property type="match status" value="1"/>
</dbReference>
<feature type="chain" id="PRO_0000294752" description="Small ribosomal subunit protein uS11">
    <location>
        <begin position="1"/>
        <end position="129"/>
    </location>
</feature>
<gene>
    <name evidence="1" type="primary">rpsK</name>
    <name type="ordered locus">ELI_08065</name>
</gene>
<name>RS11_ERYLH</name>
<proteinExistence type="inferred from homology"/>